<keyword id="KW-0067">ATP-binding</keyword>
<keyword id="KW-0460">Magnesium</keyword>
<keyword id="KW-0479">Metal-binding</keyword>
<keyword id="KW-0547">Nucleotide-binding</keyword>
<keyword id="KW-0548">Nucleotidyltransferase</keyword>
<keyword id="KW-1185">Reference proteome</keyword>
<keyword id="KW-0692">RNA repair</keyword>
<keyword id="KW-0694">RNA-binding</keyword>
<keyword id="KW-0808">Transferase</keyword>
<keyword id="KW-0819">tRNA processing</keyword>
<protein>
    <recommendedName>
        <fullName evidence="1">CCA-adding enzyme</fullName>
        <ecNumber evidence="1">2.7.7.72</ecNumber>
    </recommendedName>
    <alternativeName>
        <fullName evidence="1">CCA tRNA nucleotidyltransferase</fullName>
    </alternativeName>
    <alternativeName>
        <fullName evidence="1">tRNA CCA-pyrophosphorylase</fullName>
    </alternativeName>
    <alternativeName>
        <fullName evidence="1">tRNA adenylyl-/cytidylyl- transferase</fullName>
    </alternativeName>
    <alternativeName>
        <fullName evidence="1">tRNA nucleotidyltransferase</fullName>
    </alternativeName>
    <alternativeName>
        <fullName evidence="1">tRNA-NT</fullName>
    </alternativeName>
</protein>
<reference key="1">
    <citation type="journal article" date="2006" name="Science">
        <title>A small microbial genome: the end of a long symbiotic relationship?</title>
        <authorList>
            <person name="Perez-Brocal V."/>
            <person name="Gil R."/>
            <person name="Ramos S."/>
            <person name="Lamelas A."/>
            <person name="Postigo M."/>
            <person name="Michelena J.M."/>
            <person name="Silva F.J."/>
            <person name="Moya A."/>
            <person name="Latorre A."/>
        </authorList>
    </citation>
    <scope>NUCLEOTIDE SEQUENCE [LARGE SCALE GENOMIC DNA]</scope>
    <source>
        <strain>Cc</strain>
    </source>
</reference>
<sequence>MKIYLVGGAIRDRLLNIPVRDRDWVVVGIRDPKEMLKKNYQQVGKGFPVFIHPKTHEEYSLARTEKKNGVGHTGFLFDFSSRITLKEDLKRRDLTINAIAQDSSGKIIDFFNGKKDIQKKILRHVSYSFQEDPLRVLRIARFAALLSHLGFYIAKKTLSLMKLICSRKELLYLTPERIWKETQKGLSTQNPHVYFQVLYSCNALFFLFPEINYFYKKTYFLNSFIKHINLVQYSLIELSKISKVTKDINIRFSYFLQFFYYVYPIPNIGTKDYFFYKKPAFLLKKMLIRLKIPKETSEIIFFLCGFHNFLQNINIQSSKLIIKFFNIIDVWRKPNRLNQLIYLDFYNFNSLKNKKNDFFLGKLLKYMFSLIKDISVCSFIKEKKFKGIEIKNDLNRLRIQSFKEMKEKIILNIF</sequence>
<proteinExistence type="inferred from homology"/>
<gene>
    <name evidence="1" type="primary">cca</name>
    <name type="ordered locus">BCc_038</name>
</gene>
<organism>
    <name type="scientific">Buchnera aphidicola subsp. Cinara cedri (strain Cc)</name>
    <dbReference type="NCBI Taxonomy" id="372461"/>
    <lineage>
        <taxon>Bacteria</taxon>
        <taxon>Pseudomonadati</taxon>
        <taxon>Pseudomonadota</taxon>
        <taxon>Gammaproteobacteria</taxon>
        <taxon>Enterobacterales</taxon>
        <taxon>Erwiniaceae</taxon>
        <taxon>Buchnera</taxon>
    </lineage>
</organism>
<name>CCA_BUCCC</name>
<dbReference type="EC" id="2.7.7.72" evidence="1"/>
<dbReference type="EMBL" id="CP000263">
    <property type="protein sequence ID" value="ABJ90519.1"/>
    <property type="molecule type" value="Genomic_DNA"/>
</dbReference>
<dbReference type="RefSeq" id="WP_011672438.1">
    <property type="nucleotide sequence ID" value="NC_008513.1"/>
</dbReference>
<dbReference type="SMR" id="Q058D0"/>
<dbReference type="STRING" id="372461.BCc_038"/>
<dbReference type="KEGG" id="bcc:BCc_038"/>
<dbReference type="eggNOG" id="COG0617">
    <property type="taxonomic scope" value="Bacteria"/>
</dbReference>
<dbReference type="HOGENOM" id="CLU_015961_1_1_6"/>
<dbReference type="OrthoDB" id="9805698at2"/>
<dbReference type="Proteomes" id="UP000000669">
    <property type="component" value="Chromosome"/>
</dbReference>
<dbReference type="GO" id="GO:0005524">
    <property type="term" value="F:ATP binding"/>
    <property type="evidence" value="ECO:0007669"/>
    <property type="project" value="UniProtKB-UniRule"/>
</dbReference>
<dbReference type="GO" id="GO:0004810">
    <property type="term" value="F:CCA tRNA nucleotidyltransferase activity"/>
    <property type="evidence" value="ECO:0007669"/>
    <property type="project" value="UniProtKB-UniRule"/>
</dbReference>
<dbReference type="GO" id="GO:0000287">
    <property type="term" value="F:magnesium ion binding"/>
    <property type="evidence" value="ECO:0007669"/>
    <property type="project" value="UniProtKB-UniRule"/>
</dbReference>
<dbReference type="GO" id="GO:0000049">
    <property type="term" value="F:tRNA binding"/>
    <property type="evidence" value="ECO:0007669"/>
    <property type="project" value="UniProtKB-UniRule"/>
</dbReference>
<dbReference type="GO" id="GO:0042245">
    <property type="term" value="P:RNA repair"/>
    <property type="evidence" value="ECO:0007669"/>
    <property type="project" value="UniProtKB-KW"/>
</dbReference>
<dbReference type="GO" id="GO:0001680">
    <property type="term" value="P:tRNA 3'-terminal CCA addition"/>
    <property type="evidence" value="ECO:0007669"/>
    <property type="project" value="UniProtKB-UniRule"/>
</dbReference>
<dbReference type="Gene3D" id="3.30.460.10">
    <property type="entry name" value="Beta Polymerase, domain 2"/>
    <property type="match status" value="1"/>
</dbReference>
<dbReference type="Gene3D" id="1.10.3090.10">
    <property type="entry name" value="cca-adding enzyme, domain 2"/>
    <property type="match status" value="1"/>
</dbReference>
<dbReference type="HAMAP" id="MF_01262">
    <property type="entry name" value="CCA_bact_type2"/>
    <property type="match status" value="1"/>
</dbReference>
<dbReference type="InterPro" id="IPR012006">
    <property type="entry name" value="CCA_bact"/>
</dbReference>
<dbReference type="InterPro" id="IPR043519">
    <property type="entry name" value="NT_sf"/>
</dbReference>
<dbReference type="InterPro" id="IPR002646">
    <property type="entry name" value="PolA_pol_head_dom"/>
</dbReference>
<dbReference type="InterPro" id="IPR032828">
    <property type="entry name" value="PolyA_RNA-bd"/>
</dbReference>
<dbReference type="InterPro" id="IPR050124">
    <property type="entry name" value="tRNA_CCA-adding_enzyme"/>
</dbReference>
<dbReference type="NCBIfam" id="NF009813">
    <property type="entry name" value="PRK13298.1"/>
    <property type="match status" value="1"/>
</dbReference>
<dbReference type="PANTHER" id="PTHR47545">
    <property type="entry name" value="MULTIFUNCTIONAL CCA PROTEIN"/>
    <property type="match status" value="1"/>
</dbReference>
<dbReference type="PANTHER" id="PTHR47545:SF1">
    <property type="entry name" value="MULTIFUNCTIONAL CCA PROTEIN"/>
    <property type="match status" value="1"/>
</dbReference>
<dbReference type="Pfam" id="PF01743">
    <property type="entry name" value="PolyA_pol"/>
    <property type="match status" value="1"/>
</dbReference>
<dbReference type="Pfam" id="PF12627">
    <property type="entry name" value="PolyA_pol_RNAbd"/>
    <property type="match status" value="1"/>
</dbReference>
<dbReference type="PIRSF" id="PIRSF000813">
    <property type="entry name" value="CCA_bact"/>
    <property type="match status" value="1"/>
</dbReference>
<dbReference type="SUPFAM" id="SSF81301">
    <property type="entry name" value="Nucleotidyltransferase"/>
    <property type="match status" value="1"/>
</dbReference>
<dbReference type="SUPFAM" id="SSF81891">
    <property type="entry name" value="Poly A polymerase C-terminal region-like"/>
    <property type="match status" value="1"/>
</dbReference>
<feature type="chain" id="PRO_1000054315" description="CCA-adding enzyme">
    <location>
        <begin position="1"/>
        <end position="414"/>
    </location>
</feature>
<feature type="binding site" evidence="1">
    <location>
        <position position="8"/>
    </location>
    <ligand>
        <name>ATP</name>
        <dbReference type="ChEBI" id="CHEBI:30616"/>
    </ligand>
</feature>
<feature type="binding site" evidence="1">
    <location>
        <position position="8"/>
    </location>
    <ligand>
        <name>CTP</name>
        <dbReference type="ChEBI" id="CHEBI:37563"/>
    </ligand>
</feature>
<feature type="binding site" evidence="1">
    <location>
        <position position="11"/>
    </location>
    <ligand>
        <name>ATP</name>
        <dbReference type="ChEBI" id="CHEBI:30616"/>
    </ligand>
</feature>
<feature type="binding site" evidence="1">
    <location>
        <position position="11"/>
    </location>
    <ligand>
        <name>CTP</name>
        <dbReference type="ChEBI" id="CHEBI:37563"/>
    </ligand>
</feature>
<feature type="binding site" evidence="1">
    <location>
        <position position="21"/>
    </location>
    <ligand>
        <name>Mg(2+)</name>
        <dbReference type="ChEBI" id="CHEBI:18420"/>
    </ligand>
</feature>
<feature type="binding site" evidence="1">
    <location>
        <position position="23"/>
    </location>
    <ligand>
        <name>Mg(2+)</name>
        <dbReference type="ChEBI" id="CHEBI:18420"/>
    </ligand>
</feature>
<feature type="binding site" evidence="1">
    <location>
        <position position="92"/>
    </location>
    <ligand>
        <name>ATP</name>
        <dbReference type="ChEBI" id="CHEBI:30616"/>
    </ligand>
</feature>
<feature type="binding site" evidence="1">
    <location>
        <position position="92"/>
    </location>
    <ligand>
        <name>CTP</name>
        <dbReference type="ChEBI" id="CHEBI:37563"/>
    </ligand>
</feature>
<feature type="binding site" evidence="1">
    <location>
        <position position="138"/>
    </location>
    <ligand>
        <name>ATP</name>
        <dbReference type="ChEBI" id="CHEBI:30616"/>
    </ligand>
</feature>
<feature type="binding site" evidence="1">
    <location>
        <position position="138"/>
    </location>
    <ligand>
        <name>CTP</name>
        <dbReference type="ChEBI" id="CHEBI:37563"/>
    </ligand>
</feature>
<feature type="binding site" evidence="1">
    <location>
        <position position="141"/>
    </location>
    <ligand>
        <name>ATP</name>
        <dbReference type="ChEBI" id="CHEBI:30616"/>
    </ligand>
</feature>
<feature type="binding site" evidence="1">
    <location>
        <position position="141"/>
    </location>
    <ligand>
        <name>CTP</name>
        <dbReference type="ChEBI" id="CHEBI:37563"/>
    </ligand>
</feature>
<accession>Q058D0</accession>
<evidence type="ECO:0000255" key="1">
    <source>
        <dbReference type="HAMAP-Rule" id="MF_01262"/>
    </source>
</evidence>
<comment type="function">
    <text evidence="1">Catalyzes the addition and repair of the essential 3'-terminal CCA sequence in tRNAs without using a nucleic acid template. Adds these three nucleotides in the order of C, C, and A to the tRNA nucleotide-73, using CTP and ATP as substrates and producing inorganic pyrophosphate. tRNA 3'-terminal CCA addition is required both for tRNA processing and repair. Also involved in tRNA surveillance by mediating tandem CCA addition to generate a CCACCA at the 3' terminus of unstable tRNAs. While stable tRNAs receive only 3'-terminal CCA, unstable tRNAs are marked with CCACCA and rapidly degraded.</text>
</comment>
<comment type="catalytic activity">
    <reaction evidence="1">
        <text>a tRNA precursor + 2 CTP + ATP = a tRNA with a 3' CCA end + 3 diphosphate</text>
        <dbReference type="Rhea" id="RHEA:14433"/>
        <dbReference type="Rhea" id="RHEA-COMP:10465"/>
        <dbReference type="Rhea" id="RHEA-COMP:10468"/>
        <dbReference type="ChEBI" id="CHEBI:30616"/>
        <dbReference type="ChEBI" id="CHEBI:33019"/>
        <dbReference type="ChEBI" id="CHEBI:37563"/>
        <dbReference type="ChEBI" id="CHEBI:74896"/>
        <dbReference type="ChEBI" id="CHEBI:83071"/>
        <dbReference type="EC" id="2.7.7.72"/>
    </reaction>
</comment>
<comment type="catalytic activity">
    <reaction evidence="1">
        <text>a tRNA with a 3' CCA end + 2 CTP + ATP = a tRNA with a 3' CCACCA end + 3 diphosphate</text>
        <dbReference type="Rhea" id="RHEA:76235"/>
        <dbReference type="Rhea" id="RHEA-COMP:10468"/>
        <dbReference type="Rhea" id="RHEA-COMP:18655"/>
        <dbReference type="ChEBI" id="CHEBI:30616"/>
        <dbReference type="ChEBI" id="CHEBI:33019"/>
        <dbReference type="ChEBI" id="CHEBI:37563"/>
        <dbReference type="ChEBI" id="CHEBI:83071"/>
        <dbReference type="ChEBI" id="CHEBI:195187"/>
    </reaction>
    <physiologicalReaction direction="left-to-right" evidence="1">
        <dbReference type="Rhea" id="RHEA:76236"/>
    </physiologicalReaction>
</comment>
<comment type="cofactor">
    <cofactor evidence="1">
        <name>Mg(2+)</name>
        <dbReference type="ChEBI" id="CHEBI:18420"/>
    </cofactor>
</comment>
<comment type="miscellaneous">
    <text evidence="1">A single active site specifically recognizes both ATP and CTP and is responsible for their addition.</text>
</comment>
<comment type="similarity">
    <text evidence="1">Belongs to the tRNA nucleotidyltransferase/poly(A) polymerase family. Bacterial CCA-adding enzyme type 2 subfamily.</text>
</comment>